<dbReference type="EC" id="1.14.19.-" evidence="4 5 6"/>
<dbReference type="EMBL" id="AF260242">
    <property type="protein sequence ID" value="AAF97548.1"/>
    <property type="molecule type" value="mRNA"/>
</dbReference>
<dbReference type="EMBL" id="Z82073">
    <property type="protein sequence ID" value="CAB04924.1"/>
    <property type="molecule type" value="Genomic_DNA"/>
</dbReference>
<dbReference type="PIR" id="T26230">
    <property type="entry name" value="T26230"/>
</dbReference>
<dbReference type="RefSeq" id="NP_507482.1">
    <property type="nucleotide sequence ID" value="NM_075081.5"/>
</dbReference>
<dbReference type="SMR" id="G5ED44"/>
<dbReference type="BioGRID" id="45141">
    <property type="interactions" value="3"/>
</dbReference>
<dbReference type="FunCoup" id="G5ED44">
    <property type="interactions" value="226"/>
</dbReference>
<dbReference type="STRING" id="6239.W06D12.3.1"/>
<dbReference type="SwissLipids" id="SLP:000000269"/>
<dbReference type="PaxDb" id="6239-W06D12.3"/>
<dbReference type="PeptideAtlas" id="G5ED44"/>
<dbReference type="EnsemblMetazoa" id="W06D12.3.1">
    <property type="protein sequence ID" value="W06D12.3.1"/>
    <property type="gene ID" value="WBGene00001397"/>
</dbReference>
<dbReference type="GeneID" id="180162"/>
<dbReference type="KEGG" id="cel:CELE_W06D12.3"/>
<dbReference type="AGR" id="WB:WBGene00001397"/>
<dbReference type="CTD" id="180162"/>
<dbReference type="WormBase" id="W06D12.3">
    <property type="protein sequence ID" value="CE16551"/>
    <property type="gene ID" value="WBGene00001397"/>
    <property type="gene designation" value="fat-5"/>
</dbReference>
<dbReference type="eggNOG" id="KOG1600">
    <property type="taxonomic scope" value="Eukaryota"/>
</dbReference>
<dbReference type="GeneTree" id="ENSGT00970000196153"/>
<dbReference type="HOGENOM" id="CLU_027359_0_0_1"/>
<dbReference type="InParanoid" id="G5ED44"/>
<dbReference type="OMA" id="WHISFTT"/>
<dbReference type="OrthoDB" id="10260134at2759"/>
<dbReference type="PhylomeDB" id="G5ED44"/>
<dbReference type="Reactome" id="R-CEL-75105">
    <property type="pathway name" value="Fatty acyl-CoA biosynthesis"/>
</dbReference>
<dbReference type="UniPathway" id="UPA01038"/>
<dbReference type="PRO" id="PR:G5ED44"/>
<dbReference type="Proteomes" id="UP000001940">
    <property type="component" value="Chromosome V"/>
</dbReference>
<dbReference type="Bgee" id="WBGene00001397">
    <property type="expression patterns" value="Expressed in adult organism and 3 other cell types or tissues"/>
</dbReference>
<dbReference type="GO" id="GO:0005789">
    <property type="term" value="C:endoplasmic reticulum membrane"/>
    <property type="evidence" value="ECO:0000318"/>
    <property type="project" value="GO_Central"/>
</dbReference>
<dbReference type="GO" id="GO:0005506">
    <property type="term" value="F:iron ion binding"/>
    <property type="evidence" value="ECO:0000318"/>
    <property type="project" value="GO_Central"/>
</dbReference>
<dbReference type="GO" id="GO:0004768">
    <property type="term" value="F:stearoyl-CoA 9-desaturase activity"/>
    <property type="evidence" value="ECO:0000250"/>
    <property type="project" value="WormBase"/>
</dbReference>
<dbReference type="GO" id="GO:0042759">
    <property type="term" value="P:long-chain fatty acid biosynthetic process"/>
    <property type="evidence" value="ECO:0000316"/>
    <property type="project" value="WormBase"/>
</dbReference>
<dbReference type="GO" id="GO:0009791">
    <property type="term" value="P:post-embryonic development"/>
    <property type="evidence" value="ECO:0000316"/>
    <property type="project" value="WormBase"/>
</dbReference>
<dbReference type="GO" id="GO:0006636">
    <property type="term" value="P:unsaturated fatty acid biosynthetic process"/>
    <property type="evidence" value="ECO:0000318"/>
    <property type="project" value="GO_Central"/>
</dbReference>
<dbReference type="CDD" id="cd03505">
    <property type="entry name" value="Delta9-FADS-like"/>
    <property type="match status" value="1"/>
</dbReference>
<dbReference type="InterPro" id="IPR015876">
    <property type="entry name" value="Acyl-CoA_DS"/>
</dbReference>
<dbReference type="PANTHER" id="PTHR11351">
    <property type="entry name" value="ACYL-COA DESATURASE"/>
    <property type="match status" value="1"/>
</dbReference>
<dbReference type="PANTHER" id="PTHR11351:SF27">
    <property type="entry name" value="DELTA(9)-FATTY-ACID DESATURASE FAT-5"/>
    <property type="match status" value="1"/>
</dbReference>
<dbReference type="PRINTS" id="PR00075">
    <property type="entry name" value="FACDDSATRASE"/>
</dbReference>
<reference key="1">
    <citation type="journal article" date="2006" name="PLoS Genet.">
        <title>Genetic regulation of unsaturated fatty acid composition in C. elegans.</title>
        <authorList>
            <person name="Brock T.J."/>
            <person name="Browse J."/>
            <person name="Watts J.L."/>
        </authorList>
    </citation>
    <scope>NUCLEOTIDE SEQUENCE [MRNA]</scope>
    <scope>FUNCTION</scope>
    <scope>CATALYTIC ACTIVITY</scope>
    <scope>INDUCTION</scope>
    <scope>TISSUE SPECIFICITY</scope>
    <scope>PATHWAY</scope>
</reference>
<reference key="2">
    <citation type="journal article" date="1998" name="Science">
        <title>Genome sequence of the nematode C. elegans: a platform for investigating biology.</title>
        <authorList>
            <consortium name="The C. elegans sequencing consortium"/>
        </authorList>
    </citation>
    <scope>NUCLEOTIDE SEQUENCE [LARGE SCALE GENOMIC DNA]</scope>
    <source>
        <strain>Bristol N2</strain>
    </source>
</reference>
<reference key="3">
    <citation type="journal article" date="2000" name="Biochem. Biophys. Res. Commun.">
        <title>A palmitoyl-CoA-specific delta9 fatty acid desaturase from Caenorhabditis elegans.</title>
        <authorList>
            <person name="Watts J.L."/>
            <person name="Browse J."/>
        </authorList>
    </citation>
    <scope>FUNCTION</scope>
    <scope>CATALYTIC ACTIVITY</scope>
</reference>
<reference key="4">
    <citation type="journal article" date="2018" name="Biochim. Biophys. Acta">
        <title>Identification of cytochrome b5 CYTB-5.1 and CYTB-5.2 in C. elegans; evidence for differential regulation of SCD.</title>
        <authorList>
            <person name="He B."/>
            <person name="Zhang J."/>
            <person name="Wang Y."/>
            <person name="Li Y."/>
            <person name="Zou X."/>
            <person name="Liang B."/>
        </authorList>
    </citation>
    <scope>FUNCTION</scope>
    <scope>CATALYTIC ACTIVITY</scope>
    <scope>PATHWAY</scope>
</reference>
<organism>
    <name type="scientific">Caenorhabditis elegans</name>
    <dbReference type="NCBI Taxonomy" id="6239"/>
    <lineage>
        <taxon>Eukaryota</taxon>
        <taxon>Metazoa</taxon>
        <taxon>Ecdysozoa</taxon>
        <taxon>Nematoda</taxon>
        <taxon>Chromadorea</taxon>
        <taxon>Rhabditida</taxon>
        <taxon>Rhabditina</taxon>
        <taxon>Rhabditomorpha</taxon>
        <taxon>Rhabditoidea</taxon>
        <taxon>Rhabditidae</taxon>
        <taxon>Peloderinae</taxon>
        <taxon>Caenorhabditis</taxon>
    </lineage>
</organism>
<comment type="function">
    <text evidence="2 4 5 6">Delta(9)-fatty acid desaturase that acts preferentially on palmitoyl-CoA (hexadecanoyl-CoA) producing the monounsaturated palmitoleoyl-CoA ((9Z)-hexadecenoyl-CoA), which can be elongated to (11Z)-octadecenoyl-CoA (the most abundant monounsaturated fatty acid in Caenorhabditis elegans phospholipids and triacylglycerols). Also acts on pentadecanoyl-CoA, heptadecanoyl-CoA and myristoyl-CoA (tetradecanoyl-CoA), the monounsaturated fatty acids (MUFAs) produced are further used as substrates to synthesize polyunsaturated fatty acids (PUFAs) by several other desaturases and elongases (PubMed:10872837, PubMed:16839188, PubMed:29237573). Unlike plants, Caenorhabditis elegans desaturases seem to use fatty acyl-CoAs as substrates (By similarity).</text>
</comment>
<comment type="catalytic activity">
    <reaction evidence="4 5 6">
        <text>hexadecanoyl-CoA + 2 Fe(II)-[cytochrome b5] + O2 + 2 H(+) = (9Z)-hexadecenoyl-CoA + 2 Fe(III)-[cytochrome b5] + 2 H2O</text>
        <dbReference type="Rhea" id="RHEA:36931"/>
        <dbReference type="Rhea" id="RHEA-COMP:10438"/>
        <dbReference type="Rhea" id="RHEA-COMP:10439"/>
        <dbReference type="ChEBI" id="CHEBI:15377"/>
        <dbReference type="ChEBI" id="CHEBI:15378"/>
        <dbReference type="ChEBI" id="CHEBI:15379"/>
        <dbReference type="ChEBI" id="CHEBI:29033"/>
        <dbReference type="ChEBI" id="CHEBI:29034"/>
        <dbReference type="ChEBI" id="CHEBI:57379"/>
        <dbReference type="ChEBI" id="CHEBI:61540"/>
    </reaction>
    <physiologicalReaction direction="left-to-right" evidence="4 5 6">
        <dbReference type="Rhea" id="RHEA:36932"/>
    </physiologicalReaction>
</comment>
<comment type="catalytic activity">
    <reaction evidence="4">
        <text>tetradecanoyl-CoA + 2 Fe(II)-[cytochrome b5] + O2 + 2 H(+) = (9Z)-tetradecenoyl-CoA + 2 Fe(III)-[cytochrome b5] + 2 H2O</text>
        <dbReference type="Rhea" id="RHEA:36939"/>
        <dbReference type="Rhea" id="RHEA-COMP:10438"/>
        <dbReference type="Rhea" id="RHEA-COMP:10439"/>
        <dbReference type="ChEBI" id="CHEBI:15377"/>
        <dbReference type="ChEBI" id="CHEBI:15378"/>
        <dbReference type="ChEBI" id="CHEBI:15379"/>
        <dbReference type="ChEBI" id="CHEBI:29033"/>
        <dbReference type="ChEBI" id="CHEBI:29034"/>
        <dbReference type="ChEBI" id="CHEBI:57385"/>
        <dbReference type="ChEBI" id="CHEBI:65060"/>
    </reaction>
    <physiologicalReaction direction="left-to-right" evidence="10">
        <dbReference type="Rhea" id="RHEA:36940"/>
    </physiologicalReaction>
</comment>
<comment type="catalytic activity">
    <reaction evidence="4">
        <text>heptadecanoyl-CoA + 2 Fe(II)-[cytochrome b5] + O2 + 2 H(+) = (9Z)-heptadecenoyl-CoA + 2 Fe(III)-[cytochrome b5] + 2 H2O</text>
        <dbReference type="Rhea" id="RHEA:36951"/>
        <dbReference type="Rhea" id="RHEA-COMP:10438"/>
        <dbReference type="Rhea" id="RHEA-COMP:10439"/>
        <dbReference type="ChEBI" id="CHEBI:15377"/>
        <dbReference type="ChEBI" id="CHEBI:15378"/>
        <dbReference type="ChEBI" id="CHEBI:15379"/>
        <dbReference type="ChEBI" id="CHEBI:29033"/>
        <dbReference type="ChEBI" id="CHEBI:29034"/>
        <dbReference type="ChEBI" id="CHEBI:74307"/>
        <dbReference type="ChEBI" id="CHEBI:74308"/>
    </reaction>
    <physiologicalReaction direction="left-to-right" evidence="10">
        <dbReference type="Rhea" id="RHEA:36952"/>
    </physiologicalReaction>
</comment>
<comment type="catalytic activity">
    <reaction evidence="4">
        <text>pentadecanoyl-CoA + 2 Fe(II)-[cytochrome b5] + O2 + 2 H(+) = (9Z)-pentadecenoyl-CoA + 2 Fe(III)-[cytochrome b5] + 2 H2O</text>
        <dbReference type="Rhea" id="RHEA:36955"/>
        <dbReference type="Rhea" id="RHEA-COMP:10438"/>
        <dbReference type="Rhea" id="RHEA-COMP:10439"/>
        <dbReference type="ChEBI" id="CHEBI:15377"/>
        <dbReference type="ChEBI" id="CHEBI:15378"/>
        <dbReference type="ChEBI" id="CHEBI:15379"/>
        <dbReference type="ChEBI" id="CHEBI:29033"/>
        <dbReference type="ChEBI" id="CHEBI:29034"/>
        <dbReference type="ChEBI" id="CHEBI:74309"/>
        <dbReference type="ChEBI" id="CHEBI:74310"/>
    </reaction>
    <physiologicalReaction direction="left-to-right" evidence="10">
        <dbReference type="Rhea" id="RHEA:36956"/>
    </physiologicalReaction>
</comment>
<comment type="pathway">
    <text evidence="11 12">Lipid metabolism; monounsaturated fatty acid biosynthesis.</text>
</comment>
<comment type="subcellular location">
    <subcellularLocation>
        <location evidence="9">Membrane</location>
        <topology evidence="9">Multi-pass membrane protein</topology>
    </subcellularLocation>
</comment>
<comment type="tissue specificity">
    <text evidence="5">Expressed in the intestine in adult worms and in all four larval stages. Additional expression in the pharynx and tail cells after hatching and throughout the lifespan.</text>
</comment>
<comment type="induction">
    <text evidence="5">Expression is regulated by nhr-80 and nhr-49 in the intestine.</text>
</comment>
<comment type="domain">
    <text evidence="1">The histidine box domains may contain the active site and/or be involved in metal ion binding.</text>
</comment>
<comment type="miscellaneous">
    <text evidence="6">Cytochrome b5 CYTB-5.2 is specifically required for the desaturase activity, its knockdown or mutation alters the enzyme activity.</text>
</comment>
<comment type="similarity">
    <text evidence="9">Belongs to the fatty acid desaturase type 1 family.</text>
</comment>
<proteinExistence type="evidence at protein level"/>
<gene>
    <name type="primary">fat-5</name>
    <name type="ORF">W06D12.3</name>
</gene>
<sequence length="333" mass="38462">MTQIKVDAIISKQFLAADLNEIRQMQEESKKQVIKMEIVWKNVALFVALHIGALVGLYQLVFQAKWATVGWVFLLHTLGSMGVTGGAHRLWAHRAYKATLSWRVFLMLINSIAFQNDIIDWARDHRCHHKWTDTDADPHSTNRGMFFAHMGWLLVKKHDQLKIQGGKLDLSDLYEDPVLMFQRKNYLPLVGIFCFALPTFIPVVLWGESAFIAFYTAALFRYCFTLHATWCINSVSHWVGWQPYDHQASSVDNLWTSIAAVGEGGHNYHHTFPQDYRTSEHAEFLNWTRVLIDFGASIGMVYDRKTTPEEVIQRQCKKFGCETEREKMLHKLG</sequence>
<evidence type="ECO:0000250" key="1"/>
<evidence type="ECO:0000250" key="2">
    <source>
        <dbReference type="UniProtKB" id="G5EGA5"/>
    </source>
</evidence>
<evidence type="ECO:0000255" key="3"/>
<evidence type="ECO:0000269" key="4">
    <source>
    </source>
</evidence>
<evidence type="ECO:0000269" key="5">
    <source>
    </source>
</evidence>
<evidence type="ECO:0000269" key="6">
    <source>
    </source>
</evidence>
<evidence type="ECO:0000303" key="7">
    <source>
    </source>
</evidence>
<evidence type="ECO:0000303" key="8">
    <source>
    </source>
</evidence>
<evidence type="ECO:0000305" key="9"/>
<evidence type="ECO:0000305" key="10">
    <source>
    </source>
</evidence>
<evidence type="ECO:0000305" key="11">
    <source>
    </source>
</evidence>
<evidence type="ECO:0000305" key="12">
    <source>
    </source>
</evidence>
<protein>
    <recommendedName>
        <fullName evidence="7">Delta(9)-fatty-acid desaturase fat-5</fullName>
        <ecNumber evidence="4 5 6">1.14.19.-</ecNumber>
    </recommendedName>
    <alternativeName>
        <fullName>Fatty acid desaturase 5</fullName>
        <shortName evidence="7 8">FAT-5</shortName>
    </alternativeName>
    <alternativeName>
        <fullName>Palmitoyl-CoA fatty acid desaturase</fullName>
    </alternativeName>
</protein>
<name>FAT5_CAEEL</name>
<feature type="chain" id="PRO_0000423387" description="Delta(9)-fatty-acid desaturase fat-5">
    <location>
        <begin position="1"/>
        <end position="333"/>
    </location>
</feature>
<feature type="transmembrane region" description="Helical" evidence="3">
    <location>
        <begin position="42"/>
        <end position="62"/>
    </location>
</feature>
<feature type="transmembrane region" description="Helical" evidence="3">
    <location>
        <begin position="66"/>
        <end position="86"/>
    </location>
</feature>
<feature type="transmembrane region" description="Helical" evidence="3">
    <location>
        <begin position="187"/>
        <end position="207"/>
    </location>
</feature>
<feature type="transmembrane region" description="Helical" evidence="3">
    <location>
        <begin position="210"/>
        <end position="230"/>
    </location>
</feature>
<accession>G5ED44</accession>
<keyword id="KW-0275">Fatty acid biosynthesis</keyword>
<keyword id="KW-0276">Fatty acid metabolism</keyword>
<keyword id="KW-0444">Lipid biosynthesis</keyword>
<keyword id="KW-0443">Lipid metabolism</keyword>
<keyword id="KW-0472">Membrane</keyword>
<keyword id="KW-0560">Oxidoreductase</keyword>
<keyword id="KW-1185">Reference proteome</keyword>
<keyword id="KW-0812">Transmembrane</keyword>
<keyword id="KW-1133">Transmembrane helix</keyword>